<accession>P50358</accession>
<geneLocation type="plasmid">
    <name>sym pNGR234a</name>
</geneLocation>
<dbReference type="EMBL" id="U00090">
    <property type="protein sequence ID" value="AAB91853.1"/>
    <property type="molecule type" value="Genomic_DNA"/>
</dbReference>
<dbReference type="EMBL" id="X74314">
    <property type="protein sequence ID" value="CAA52363.1"/>
    <property type="molecule type" value="Genomic_DNA"/>
</dbReference>
<dbReference type="PIR" id="S35957">
    <property type="entry name" value="S35957"/>
</dbReference>
<dbReference type="RefSeq" id="NP_444066.1">
    <property type="nucleotide sequence ID" value="NC_000914.2"/>
</dbReference>
<dbReference type="RefSeq" id="YP_002823938.1">
    <property type="nucleotide sequence ID" value="NC_012586.1"/>
</dbReference>
<dbReference type="KEGG" id="rhi:NGR_a01590"/>
<dbReference type="eggNOG" id="COG3293">
    <property type="taxonomic scope" value="Bacteria"/>
</dbReference>
<dbReference type="HOGENOM" id="CLU_055261_2_1_5"/>
<dbReference type="OrthoDB" id="9798237at2"/>
<dbReference type="Proteomes" id="UP000001054">
    <property type="component" value="Plasmid pNGR234a"/>
</dbReference>
<dbReference type="GO" id="GO:0032196">
    <property type="term" value="P:transposition"/>
    <property type="evidence" value="ECO:0007669"/>
    <property type="project" value="UniProtKB-KW"/>
</dbReference>
<dbReference type="InterPro" id="IPR025161">
    <property type="entry name" value="IS402-like_dom"/>
</dbReference>
<dbReference type="InterPro" id="IPR052909">
    <property type="entry name" value="Transposase_6_like"/>
</dbReference>
<dbReference type="NCBIfam" id="NF033580">
    <property type="entry name" value="transpos_IS5_3"/>
    <property type="match status" value="1"/>
</dbReference>
<dbReference type="PANTHER" id="PTHR46637:SF1">
    <property type="entry name" value="BLL5188 PROTEIN"/>
    <property type="match status" value="1"/>
</dbReference>
<dbReference type="PANTHER" id="PTHR46637">
    <property type="entry name" value="TIS1421-TRANSPOSASE PROTEIN A"/>
    <property type="match status" value="1"/>
</dbReference>
<dbReference type="Pfam" id="PF13340">
    <property type="entry name" value="DUF4096"/>
    <property type="match status" value="1"/>
</dbReference>
<feature type="chain" id="PRO_0000200948" description="Uncharacterized protein y4sN">
    <location>
        <begin position="1"/>
        <end position="125"/>
    </location>
</feature>
<feature type="sequence conflict" description="In Ref. 3; CAA52363." evidence="1" ref="3">
    <original>G</original>
    <variation>D</variation>
    <location>
        <position position="47"/>
    </location>
</feature>
<feature type="sequence conflict" description="In Ref. 3; CAA52363." evidence="1" ref="3">
    <original>R</original>
    <variation>L</variation>
    <location>
        <position position="64"/>
    </location>
</feature>
<protein>
    <recommendedName>
        <fullName>Uncharacterized protein y4sN</fullName>
    </recommendedName>
</protein>
<name>Y4SN_SINFN</name>
<comment type="similarity">
    <text evidence="1">To transposase of insertion sequence IS6501.</text>
</comment>
<evidence type="ECO:0000305" key="1"/>
<keyword id="KW-0614">Plasmid</keyword>
<keyword id="KW-1185">Reference proteome</keyword>
<keyword id="KW-0814">Transposable element</keyword>
<keyword id="KW-0815">Transposition</keyword>
<sequence>MDCDGLRDDQWERIRGFVPGGTKGKRGPRTNNRLFLDALLWMARSGGRWRDLPERLGDYRAVKRRYYRWIEMGVLDEMLAVLAREADLEWLMIDSTIVRAHQHAAGARRAKGGRMPRAWVGLEAG</sequence>
<organism>
    <name type="scientific">Sinorhizobium fredii (strain NBRC 101917 / NGR234)</name>
    <dbReference type="NCBI Taxonomy" id="394"/>
    <lineage>
        <taxon>Bacteria</taxon>
        <taxon>Pseudomonadati</taxon>
        <taxon>Pseudomonadota</taxon>
        <taxon>Alphaproteobacteria</taxon>
        <taxon>Hyphomicrobiales</taxon>
        <taxon>Rhizobiaceae</taxon>
        <taxon>Sinorhizobium/Ensifer group</taxon>
        <taxon>Sinorhizobium</taxon>
    </lineage>
</organism>
<gene>
    <name type="ordered locus">NGR_a01590</name>
    <name type="ORF">y4sN</name>
</gene>
<proteinExistence type="predicted"/>
<reference key="1">
    <citation type="journal article" date="1997" name="Nature">
        <title>Molecular basis of symbiosis between Rhizobium and legumes.</title>
        <authorList>
            <person name="Freiberg C.A."/>
            <person name="Fellay R."/>
            <person name="Bairoch A."/>
            <person name="Broughton W.J."/>
            <person name="Rosenthal A."/>
            <person name="Perret X."/>
        </authorList>
    </citation>
    <scope>NUCLEOTIDE SEQUENCE [LARGE SCALE GENOMIC DNA]</scope>
    <source>
        <strain>NBRC 101917 / NGR234</strain>
    </source>
</reference>
<reference key="2">
    <citation type="journal article" date="2009" name="Appl. Environ. Microbiol.">
        <title>Rhizobium sp. strain NGR234 possesses a remarkable number of secretion systems.</title>
        <authorList>
            <person name="Schmeisser C."/>
            <person name="Liesegang H."/>
            <person name="Krysciak D."/>
            <person name="Bakkou N."/>
            <person name="Le Quere A."/>
            <person name="Wollherr A."/>
            <person name="Heinemeyer I."/>
            <person name="Morgenstern B."/>
            <person name="Pommerening-Roeser A."/>
            <person name="Flores M."/>
            <person name="Palacios R."/>
            <person name="Brenner S."/>
            <person name="Gottschalk G."/>
            <person name="Schmitz R.A."/>
            <person name="Broughton W.J."/>
            <person name="Perret X."/>
            <person name="Strittmatter A.W."/>
            <person name="Streit W.R."/>
        </authorList>
    </citation>
    <scope>NUCLEOTIDE SEQUENCE [LARGE SCALE GENOMIC DNA]</scope>
    <source>
        <strain>NBRC 101917 / NGR234</strain>
    </source>
</reference>
<reference key="3">
    <citation type="journal article" date="1994" name="Nucleic Acids Res.">
        <title>Subtraction hybridisation and shot-gun sequencing: a new approach to identify symbiotic loci.</title>
        <authorList>
            <person name="Perret X."/>
            <person name="Fellay R."/>
            <person name="Bjourson A.J."/>
            <person name="Cooper J.E."/>
            <person name="Brenner S."/>
            <person name="Broughton W.J."/>
        </authorList>
    </citation>
    <scope>NUCLEOTIDE SEQUENCE [GENOMIC DNA] OF 1-123</scope>
</reference>